<comment type="function">
    <text evidence="1">Catalyzes the reduction of the glycolytic intermediate dihydroxyacetone phosphate (DHAP) to sn-glycerol 3-phosphate (G3P), the key precursor for phospholipid synthesis.</text>
</comment>
<comment type="catalytic activity">
    <reaction evidence="1">
        <text>sn-glycerol 3-phosphate + NAD(+) = dihydroxyacetone phosphate + NADH + H(+)</text>
        <dbReference type="Rhea" id="RHEA:11092"/>
        <dbReference type="ChEBI" id="CHEBI:15378"/>
        <dbReference type="ChEBI" id="CHEBI:57540"/>
        <dbReference type="ChEBI" id="CHEBI:57597"/>
        <dbReference type="ChEBI" id="CHEBI:57642"/>
        <dbReference type="ChEBI" id="CHEBI:57945"/>
        <dbReference type="EC" id="1.1.1.94"/>
    </reaction>
    <physiologicalReaction direction="right-to-left" evidence="1">
        <dbReference type="Rhea" id="RHEA:11094"/>
    </physiologicalReaction>
</comment>
<comment type="catalytic activity">
    <reaction evidence="1">
        <text>sn-glycerol 3-phosphate + NADP(+) = dihydroxyacetone phosphate + NADPH + H(+)</text>
        <dbReference type="Rhea" id="RHEA:11096"/>
        <dbReference type="ChEBI" id="CHEBI:15378"/>
        <dbReference type="ChEBI" id="CHEBI:57597"/>
        <dbReference type="ChEBI" id="CHEBI:57642"/>
        <dbReference type="ChEBI" id="CHEBI:57783"/>
        <dbReference type="ChEBI" id="CHEBI:58349"/>
        <dbReference type="EC" id="1.1.1.94"/>
    </reaction>
    <physiologicalReaction direction="right-to-left" evidence="1">
        <dbReference type="Rhea" id="RHEA:11098"/>
    </physiologicalReaction>
</comment>
<comment type="pathway">
    <text evidence="1">Membrane lipid metabolism; glycerophospholipid metabolism.</text>
</comment>
<comment type="subcellular location">
    <subcellularLocation>
        <location evidence="1">Cytoplasm</location>
    </subcellularLocation>
</comment>
<comment type="similarity">
    <text evidence="1">Belongs to the NAD-dependent glycerol-3-phosphate dehydrogenase family.</text>
</comment>
<organism>
    <name type="scientific">Yersinia pseudotuberculosis serotype O:3 (strain YPIII)</name>
    <dbReference type="NCBI Taxonomy" id="502800"/>
    <lineage>
        <taxon>Bacteria</taxon>
        <taxon>Pseudomonadati</taxon>
        <taxon>Pseudomonadota</taxon>
        <taxon>Gammaproteobacteria</taxon>
        <taxon>Enterobacterales</taxon>
        <taxon>Yersiniaceae</taxon>
        <taxon>Yersinia</taxon>
    </lineage>
</organism>
<accession>B1JQV5</accession>
<gene>
    <name evidence="1" type="primary">gpsA</name>
    <name type="ordered locus">YPK_4137</name>
</gene>
<sequence length="339" mass="36194">MNTNPASMAVIGAGSYGTALAITLARNGHQVVLWGHDPKHIQQLQQDRCNRAFLPDAAFPDTLRLETDLACALAASRDVLVVVPSHVFGAVLHQLKPHLRKDARIVWATKGLEAETGRLLQDVAREVLGEAIPLAVISGPTFAKELAAGLPTAIALASTDVQFSEDLQQLLHCGKSFRVYSNPDFIGVQLGGAVKNVIAIGAGMSDGIGFGANARTALITRGLAEMTRLGTALGADPSTFMGMAGLGDLVLTCTDNQSRNRRFGIMLGQGLGVKEAQDNIGQVVEGYRNTKEVLALAQRHGVEMPITEQIYQVLYCHKNAREAALTLLGRTKKDEKIGI</sequence>
<dbReference type="EC" id="1.1.1.94" evidence="1"/>
<dbReference type="EMBL" id="CP000950">
    <property type="protein sequence ID" value="ACA70396.1"/>
    <property type="molecule type" value="Genomic_DNA"/>
</dbReference>
<dbReference type="RefSeq" id="WP_002208975.1">
    <property type="nucleotide sequence ID" value="NZ_CP009792.1"/>
</dbReference>
<dbReference type="SMR" id="B1JQV5"/>
<dbReference type="GeneID" id="57974523"/>
<dbReference type="KEGG" id="ypy:YPK_4137"/>
<dbReference type="PATRIC" id="fig|502800.11.peg.488"/>
<dbReference type="UniPathway" id="UPA00940"/>
<dbReference type="GO" id="GO:0005829">
    <property type="term" value="C:cytosol"/>
    <property type="evidence" value="ECO:0007669"/>
    <property type="project" value="TreeGrafter"/>
</dbReference>
<dbReference type="GO" id="GO:0047952">
    <property type="term" value="F:glycerol-3-phosphate dehydrogenase [NAD(P)+] activity"/>
    <property type="evidence" value="ECO:0007669"/>
    <property type="project" value="UniProtKB-UniRule"/>
</dbReference>
<dbReference type="GO" id="GO:0051287">
    <property type="term" value="F:NAD binding"/>
    <property type="evidence" value="ECO:0007669"/>
    <property type="project" value="InterPro"/>
</dbReference>
<dbReference type="GO" id="GO:0005975">
    <property type="term" value="P:carbohydrate metabolic process"/>
    <property type="evidence" value="ECO:0007669"/>
    <property type="project" value="InterPro"/>
</dbReference>
<dbReference type="GO" id="GO:0046167">
    <property type="term" value="P:glycerol-3-phosphate biosynthetic process"/>
    <property type="evidence" value="ECO:0007669"/>
    <property type="project" value="UniProtKB-UniRule"/>
</dbReference>
<dbReference type="GO" id="GO:0046168">
    <property type="term" value="P:glycerol-3-phosphate catabolic process"/>
    <property type="evidence" value="ECO:0007669"/>
    <property type="project" value="InterPro"/>
</dbReference>
<dbReference type="GO" id="GO:0046474">
    <property type="term" value="P:glycerophospholipid biosynthetic process"/>
    <property type="evidence" value="ECO:0007669"/>
    <property type="project" value="TreeGrafter"/>
</dbReference>
<dbReference type="FunFam" id="1.10.1040.10:FF:000001">
    <property type="entry name" value="Glycerol-3-phosphate dehydrogenase [NAD(P)+]"/>
    <property type="match status" value="1"/>
</dbReference>
<dbReference type="FunFam" id="3.40.50.720:FF:000019">
    <property type="entry name" value="Glycerol-3-phosphate dehydrogenase [NAD(P)+]"/>
    <property type="match status" value="1"/>
</dbReference>
<dbReference type="Gene3D" id="1.10.1040.10">
    <property type="entry name" value="N-(1-d-carboxylethyl)-l-norvaline Dehydrogenase, domain 2"/>
    <property type="match status" value="1"/>
</dbReference>
<dbReference type="Gene3D" id="3.40.50.720">
    <property type="entry name" value="NAD(P)-binding Rossmann-like Domain"/>
    <property type="match status" value="1"/>
</dbReference>
<dbReference type="HAMAP" id="MF_00394">
    <property type="entry name" value="NAD_Glyc3P_dehydrog"/>
    <property type="match status" value="1"/>
</dbReference>
<dbReference type="InterPro" id="IPR008927">
    <property type="entry name" value="6-PGluconate_DH-like_C_sf"/>
</dbReference>
<dbReference type="InterPro" id="IPR013328">
    <property type="entry name" value="6PGD_dom2"/>
</dbReference>
<dbReference type="InterPro" id="IPR006168">
    <property type="entry name" value="G3P_DH_NAD-dep"/>
</dbReference>
<dbReference type="InterPro" id="IPR006109">
    <property type="entry name" value="G3P_DH_NAD-dep_C"/>
</dbReference>
<dbReference type="InterPro" id="IPR011128">
    <property type="entry name" value="G3P_DH_NAD-dep_N"/>
</dbReference>
<dbReference type="InterPro" id="IPR036291">
    <property type="entry name" value="NAD(P)-bd_dom_sf"/>
</dbReference>
<dbReference type="NCBIfam" id="NF000939">
    <property type="entry name" value="PRK00094.1-1"/>
    <property type="match status" value="1"/>
</dbReference>
<dbReference type="NCBIfam" id="NF000940">
    <property type="entry name" value="PRK00094.1-2"/>
    <property type="match status" value="1"/>
</dbReference>
<dbReference type="NCBIfam" id="NF000942">
    <property type="entry name" value="PRK00094.1-4"/>
    <property type="match status" value="1"/>
</dbReference>
<dbReference type="PANTHER" id="PTHR11728">
    <property type="entry name" value="GLYCEROL-3-PHOSPHATE DEHYDROGENASE"/>
    <property type="match status" value="1"/>
</dbReference>
<dbReference type="PANTHER" id="PTHR11728:SF1">
    <property type="entry name" value="GLYCEROL-3-PHOSPHATE DEHYDROGENASE [NAD(+)] 2, CHLOROPLASTIC"/>
    <property type="match status" value="1"/>
</dbReference>
<dbReference type="Pfam" id="PF07479">
    <property type="entry name" value="NAD_Gly3P_dh_C"/>
    <property type="match status" value="1"/>
</dbReference>
<dbReference type="Pfam" id="PF01210">
    <property type="entry name" value="NAD_Gly3P_dh_N"/>
    <property type="match status" value="1"/>
</dbReference>
<dbReference type="PIRSF" id="PIRSF000114">
    <property type="entry name" value="Glycerol-3-P_dh"/>
    <property type="match status" value="1"/>
</dbReference>
<dbReference type="PRINTS" id="PR00077">
    <property type="entry name" value="GPDHDRGNASE"/>
</dbReference>
<dbReference type="SUPFAM" id="SSF48179">
    <property type="entry name" value="6-phosphogluconate dehydrogenase C-terminal domain-like"/>
    <property type="match status" value="1"/>
</dbReference>
<dbReference type="SUPFAM" id="SSF51735">
    <property type="entry name" value="NAD(P)-binding Rossmann-fold domains"/>
    <property type="match status" value="1"/>
</dbReference>
<dbReference type="PROSITE" id="PS00957">
    <property type="entry name" value="NAD_G3PDH"/>
    <property type="match status" value="1"/>
</dbReference>
<evidence type="ECO:0000255" key="1">
    <source>
        <dbReference type="HAMAP-Rule" id="MF_00394"/>
    </source>
</evidence>
<feature type="chain" id="PRO_1000123208" description="Glycerol-3-phosphate dehydrogenase [NAD(P)+]">
    <location>
        <begin position="1"/>
        <end position="339"/>
    </location>
</feature>
<feature type="active site" description="Proton acceptor" evidence="1">
    <location>
        <position position="195"/>
    </location>
</feature>
<feature type="binding site" evidence="1">
    <location>
        <position position="15"/>
    </location>
    <ligand>
        <name>NADPH</name>
        <dbReference type="ChEBI" id="CHEBI:57783"/>
    </ligand>
</feature>
<feature type="binding site" evidence="1">
    <location>
        <position position="16"/>
    </location>
    <ligand>
        <name>NADPH</name>
        <dbReference type="ChEBI" id="CHEBI:57783"/>
    </ligand>
</feature>
<feature type="binding site" evidence="1">
    <location>
        <position position="36"/>
    </location>
    <ligand>
        <name>NADPH</name>
        <dbReference type="ChEBI" id="CHEBI:57783"/>
    </ligand>
</feature>
<feature type="binding site" evidence="1">
    <location>
        <position position="110"/>
    </location>
    <ligand>
        <name>NADPH</name>
        <dbReference type="ChEBI" id="CHEBI:57783"/>
    </ligand>
</feature>
<feature type="binding site" evidence="1">
    <location>
        <position position="110"/>
    </location>
    <ligand>
        <name>sn-glycerol 3-phosphate</name>
        <dbReference type="ChEBI" id="CHEBI:57597"/>
    </ligand>
</feature>
<feature type="binding site" evidence="1">
    <location>
        <position position="139"/>
    </location>
    <ligand>
        <name>sn-glycerol 3-phosphate</name>
        <dbReference type="ChEBI" id="CHEBI:57597"/>
    </ligand>
</feature>
<feature type="binding site" evidence="1">
    <location>
        <position position="141"/>
    </location>
    <ligand>
        <name>sn-glycerol 3-phosphate</name>
        <dbReference type="ChEBI" id="CHEBI:57597"/>
    </ligand>
</feature>
<feature type="binding site" evidence="1">
    <location>
        <position position="143"/>
    </location>
    <ligand>
        <name>NADPH</name>
        <dbReference type="ChEBI" id="CHEBI:57783"/>
    </ligand>
</feature>
<feature type="binding site" evidence="1">
    <location>
        <position position="195"/>
    </location>
    <ligand>
        <name>sn-glycerol 3-phosphate</name>
        <dbReference type="ChEBI" id="CHEBI:57597"/>
    </ligand>
</feature>
<feature type="binding site" evidence="1">
    <location>
        <position position="248"/>
    </location>
    <ligand>
        <name>sn-glycerol 3-phosphate</name>
        <dbReference type="ChEBI" id="CHEBI:57597"/>
    </ligand>
</feature>
<feature type="binding site" evidence="1">
    <location>
        <position position="258"/>
    </location>
    <ligand>
        <name>sn-glycerol 3-phosphate</name>
        <dbReference type="ChEBI" id="CHEBI:57597"/>
    </ligand>
</feature>
<feature type="binding site" evidence="1">
    <location>
        <position position="259"/>
    </location>
    <ligand>
        <name>NADPH</name>
        <dbReference type="ChEBI" id="CHEBI:57783"/>
    </ligand>
</feature>
<feature type="binding site" evidence="1">
    <location>
        <position position="259"/>
    </location>
    <ligand>
        <name>sn-glycerol 3-phosphate</name>
        <dbReference type="ChEBI" id="CHEBI:57597"/>
    </ligand>
</feature>
<feature type="binding site" evidence="1">
    <location>
        <position position="260"/>
    </location>
    <ligand>
        <name>sn-glycerol 3-phosphate</name>
        <dbReference type="ChEBI" id="CHEBI:57597"/>
    </ligand>
</feature>
<feature type="binding site" evidence="1">
    <location>
        <position position="283"/>
    </location>
    <ligand>
        <name>NADPH</name>
        <dbReference type="ChEBI" id="CHEBI:57783"/>
    </ligand>
</feature>
<feature type="binding site" evidence="1">
    <location>
        <position position="285"/>
    </location>
    <ligand>
        <name>NADPH</name>
        <dbReference type="ChEBI" id="CHEBI:57783"/>
    </ligand>
</feature>
<keyword id="KW-0963">Cytoplasm</keyword>
<keyword id="KW-0444">Lipid biosynthesis</keyword>
<keyword id="KW-0443">Lipid metabolism</keyword>
<keyword id="KW-0520">NAD</keyword>
<keyword id="KW-0521">NADP</keyword>
<keyword id="KW-0547">Nucleotide-binding</keyword>
<keyword id="KW-0560">Oxidoreductase</keyword>
<keyword id="KW-0594">Phospholipid biosynthesis</keyword>
<keyword id="KW-1208">Phospholipid metabolism</keyword>
<reference key="1">
    <citation type="submission" date="2008-02" db="EMBL/GenBank/DDBJ databases">
        <title>Complete sequence of Yersinia pseudotuberculosis YPIII.</title>
        <authorList>
            <consortium name="US DOE Joint Genome Institute"/>
            <person name="Copeland A."/>
            <person name="Lucas S."/>
            <person name="Lapidus A."/>
            <person name="Glavina del Rio T."/>
            <person name="Dalin E."/>
            <person name="Tice H."/>
            <person name="Bruce D."/>
            <person name="Goodwin L."/>
            <person name="Pitluck S."/>
            <person name="Munk A.C."/>
            <person name="Brettin T."/>
            <person name="Detter J.C."/>
            <person name="Han C."/>
            <person name="Tapia R."/>
            <person name="Schmutz J."/>
            <person name="Larimer F."/>
            <person name="Land M."/>
            <person name="Hauser L."/>
            <person name="Challacombe J.F."/>
            <person name="Green L."/>
            <person name="Lindler L.E."/>
            <person name="Nikolich M.P."/>
            <person name="Richardson P."/>
        </authorList>
    </citation>
    <scope>NUCLEOTIDE SEQUENCE [LARGE SCALE GENOMIC DNA]</scope>
    <source>
        <strain>YPIII</strain>
    </source>
</reference>
<proteinExistence type="inferred from homology"/>
<name>GPDA_YERPY</name>
<protein>
    <recommendedName>
        <fullName evidence="1">Glycerol-3-phosphate dehydrogenase [NAD(P)+]</fullName>
        <ecNumber evidence="1">1.1.1.94</ecNumber>
    </recommendedName>
    <alternativeName>
        <fullName evidence="1">NAD(P)(+)-dependent glycerol-3-phosphate dehydrogenase</fullName>
    </alternativeName>
    <alternativeName>
        <fullName evidence="1">NAD(P)H-dependent dihydroxyacetone-phosphate reductase</fullName>
    </alternativeName>
</protein>